<feature type="signal peptide" evidence="1">
    <location>
        <begin position="1"/>
        <end position="21"/>
    </location>
</feature>
<feature type="chain" id="PRO_1000021662" description="Outer-membrane lipoprotein LolB">
    <location>
        <begin position="22"/>
        <end position="207"/>
    </location>
</feature>
<feature type="lipid moiety-binding region" description="N-palmitoyl cysteine" evidence="1">
    <location>
        <position position="22"/>
    </location>
</feature>
<feature type="lipid moiety-binding region" description="S-diacylglycerol cysteine" evidence="1">
    <location>
        <position position="22"/>
    </location>
</feature>
<keyword id="KW-0998">Cell outer membrane</keyword>
<keyword id="KW-0143">Chaperone</keyword>
<keyword id="KW-0449">Lipoprotein</keyword>
<keyword id="KW-0472">Membrane</keyword>
<keyword id="KW-0564">Palmitate</keyword>
<keyword id="KW-0653">Protein transport</keyword>
<keyword id="KW-1185">Reference proteome</keyword>
<keyword id="KW-0732">Signal</keyword>
<keyword id="KW-0813">Transport</keyword>
<sequence length="207" mass="23763">MPTKTVRCLRLLPLASLLLAACSVNQPTQTGKSPTSPEWQKHQQKVQQLTQYQTRGAFAYISDSKRVSANFFWQDTPPQRYRLLLTNPLGSTELELRAQPDGVQITDNQGKRYVGKDAEYMIQQLTGMAIPLNNLRQWILGIPGDATEFTLDERYLLKTITYRQGNQNWDVSYQSYNTELTPPLPTSLELVQGEQRIKLKMNNWMVK</sequence>
<protein>
    <recommendedName>
        <fullName evidence="1">Outer-membrane lipoprotein LolB</fullName>
    </recommendedName>
</protein>
<accession>Q6D553</accession>
<name>LOLB_PECAS</name>
<dbReference type="EMBL" id="BX950851">
    <property type="protein sequence ID" value="CAG75090.1"/>
    <property type="molecule type" value="Genomic_DNA"/>
</dbReference>
<dbReference type="RefSeq" id="WP_011093747.1">
    <property type="nucleotide sequence ID" value="NC_004547.2"/>
</dbReference>
<dbReference type="SMR" id="Q6D553"/>
<dbReference type="STRING" id="218491.ECA2188"/>
<dbReference type="GeneID" id="57209090"/>
<dbReference type="KEGG" id="eca:ECA2188"/>
<dbReference type="PATRIC" id="fig|218491.5.peg.2221"/>
<dbReference type="eggNOG" id="COG3017">
    <property type="taxonomic scope" value="Bacteria"/>
</dbReference>
<dbReference type="HOGENOM" id="CLU_092816_1_1_6"/>
<dbReference type="OrthoDB" id="9797618at2"/>
<dbReference type="Proteomes" id="UP000007966">
    <property type="component" value="Chromosome"/>
</dbReference>
<dbReference type="GO" id="GO:0009279">
    <property type="term" value="C:cell outer membrane"/>
    <property type="evidence" value="ECO:0007669"/>
    <property type="project" value="UniProtKB-SubCell"/>
</dbReference>
<dbReference type="GO" id="GO:0044874">
    <property type="term" value="P:lipoprotein localization to outer membrane"/>
    <property type="evidence" value="ECO:0007669"/>
    <property type="project" value="UniProtKB-UniRule"/>
</dbReference>
<dbReference type="GO" id="GO:0015031">
    <property type="term" value="P:protein transport"/>
    <property type="evidence" value="ECO:0007669"/>
    <property type="project" value="UniProtKB-KW"/>
</dbReference>
<dbReference type="CDD" id="cd16326">
    <property type="entry name" value="LolB"/>
    <property type="match status" value="1"/>
</dbReference>
<dbReference type="Gene3D" id="2.50.20.10">
    <property type="entry name" value="Lipoprotein localisation LolA/LolB/LppX"/>
    <property type="match status" value="1"/>
</dbReference>
<dbReference type="HAMAP" id="MF_00233">
    <property type="entry name" value="LolB"/>
    <property type="match status" value="1"/>
</dbReference>
<dbReference type="InterPro" id="IPR029046">
    <property type="entry name" value="LolA/LolB/LppX"/>
</dbReference>
<dbReference type="InterPro" id="IPR004565">
    <property type="entry name" value="OM_lipoprot_LolB"/>
</dbReference>
<dbReference type="NCBIfam" id="TIGR00548">
    <property type="entry name" value="lolB"/>
    <property type="match status" value="1"/>
</dbReference>
<dbReference type="Pfam" id="PF03550">
    <property type="entry name" value="LolB"/>
    <property type="match status" value="1"/>
</dbReference>
<dbReference type="SUPFAM" id="SSF89392">
    <property type="entry name" value="Prokaryotic lipoproteins and lipoprotein localization factors"/>
    <property type="match status" value="1"/>
</dbReference>
<dbReference type="PROSITE" id="PS51257">
    <property type="entry name" value="PROKAR_LIPOPROTEIN"/>
    <property type="match status" value="1"/>
</dbReference>
<reference key="1">
    <citation type="journal article" date="2004" name="Proc. Natl. Acad. Sci. U.S.A.">
        <title>Genome sequence of the enterobacterial phytopathogen Erwinia carotovora subsp. atroseptica and characterization of virulence factors.</title>
        <authorList>
            <person name="Bell K.S."/>
            <person name="Sebaihia M."/>
            <person name="Pritchard L."/>
            <person name="Holden M.T.G."/>
            <person name="Hyman L.J."/>
            <person name="Holeva M.C."/>
            <person name="Thomson N.R."/>
            <person name="Bentley S.D."/>
            <person name="Churcher L.J.C."/>
            <person name="Mungall K."/>
            <person name="Atkin R."/>
            <person name="Bason N."/>
            <person name="Brooks K."/>
            <person name="Chillingworth T."/>
            <person name="Clark K."/>
            <person name="Doggett J."/>
            <person name="Fraser A."/>
            <person name="Hance Z."/>
            <person name="Hauser H."/>
            <person name="Jagels K."/>
            <person name="Moule S."/>
            <person name="Norbertczak H."/>
            <person name="Ormond D."/>
            <person name="Price C."/>
            <person name="Quail M.A."/>
            <person name="Sanders M."/>
            <person name="Walker D."/>
            <person name="Whitehead S."/>
            <person name="Salmond G.P.C."/>
            <person name="Birch P.R.J."/>
            <person name="Parkhill J."/>
            <person name="Toth I.K."/>
        </authorList>
    </citation>
    <scope>NUCLEOTIDE SEQUENCE [LARGE SCALE GENOMIC DNA]</scope>
    <source>
        <strain>SCRI 1043 / ATCC BAA-672</strain>
    </source>
</reference>
<comment type="function">
    <text evidence="1">Plays a critical role in the incorporation of lipoproteins in the outer membrane after they are released by the LolA protein.</text>
</comment>
<comment type="subunit">
    <text evidence="1">Monomer.</text>
</comment>
<comment type="subcellular location">
    <subcellularLocation>
        <location evidence="1">Cell outer membrane</location>
        <topology evidence="1">Lipid-anchor</topology>
    </subcellularLocation>
</comment>
<comment type="similarity">
    <text evidence="1">Belongs to the LolB family.</text>
</comment>
<evidence type="ECO:0000255" key="1">
    <source>
        <dbReference type="HAMAP-Rule" id="MF_00233"/>
    </source>
</evidence>
<gene>
    <name evidence="1" type="primary">lolB</name>
    <name type="ordered locus">ECA2188</name>
</gene>
<organism>
    <name type="scientific">Pectobacterium atrosepticum (strain SCRI 1043 / ATCC BAA-672)</name>
    <name type="common">Erwinia carotovora subsp. atroseptica</name>
    <dbReference type="NCBI Taxonomy" id="218491"/>
    <lineage>
        <taxon>Bacteria</taxon>
        <taxon>Pseudomonadati</taxon>
        <taxon>Pseudomonadota</taxon>
        <taxon>Gammaproteobacteria</taxon>
        <taxon>Enterobacterales</taxon>
        <taxon>Pectobacteriaceae</taxon>
        <taxon>Pectobacterium</taxon>
    </lineage>
</organism>
<proteinExistence type="inferred from homology"/>